<dbReference type="EC" id="3.4.22.-"/>
<dbReference type="EMBL" id="AB026632">
    <property type="protein sequence ID" value="BAA97500.1"/>
    <property type="molecule type" value="Genomic_DNA"/>
</dbReference>
<dbReference type="EMBL" id="CP002688">
    <property type="protein sequence ID" value="AED97291.1"/>
    <property type="molecule type" value="Genomic_DNA"/>
</dbReference>
<dbReference type="EMBL" id="BT012189">
    <property type="protein sequence ID" value="AAS76283.1"/>
    <property type="molecule type" value="mRNA"/>
</dbReference>
<dbReference type="EMBL" id="AK221465">
    <property type="protein sequence ID" value="BAD94571.1"/>
    <property type="molecule type" value="mRNA"/>
</dbReference>
<dbReference type="RefSeq" id="NP_200827.1">
    <property type="nucleotide sequence ID" value="NM_125412.4"/>
</dbReference>
<dbReference type="SMR" id="Q9LSS7"/>
<dbReference type="FunCoup" id="Q9LSS7">
    <property type="interactions" value="1728"/>
</dbReference>
<dbReference type="STRING" id="3702.Q9LSS7"/>
<dbReference type="MEROPS" id="C48.A03"/>
<dbReference type="PaxDb" id="3702-AT5G60190.1"/>
<dbReference type="ProteomicsDB" id="226675"/>
<dbReference type="DNASU" id="836141"/>
<dbReference type="EnsemblPlants" id="AT5G60190.1">
    <property type="protein sequence ID" value="AT5G60190.1"/>
    <property type="gene ID" value="AT5G60190"/>
</dbReference>
<dbReference type="GeneID" id="836141"/>
<dbReference type="Gramene" id="AT5G60190.1">
    <property type="protein sequence ID" value="AT5G60190.1"/>
    <property type="gene ID" value="AT5G60190"/>
</dbReference>
<dbReference type="KEGG" id="ath:AT5G60190"/>
<dbReference type="Araport" id="AT5G60190"/>
<dbReference type="TAIR" id="AT5G60190"/>
<dbReference type="eggNOG" id="KOG3246">
    <property type="taxonomic scope" value="Eukaryota"/>
</dbReference>
<dbReference type="HOGENOM" id="CLU_043678_3_0_1"/>
<dbReference type="InParanoid" id="Q9LSS7"/>
<dbReference type="OMA" id="GFYFEYL"/>
<dbReference type="OrthoDB" id="5065855at2759"/>
<dbReference type="PhylomeDB" id="Q9LSS7"/>
<dbReference type="PRO" id="PR:Q9LSS7"/>
<dbReference type="Proteomes" id="UP000006548">
    <property type="component" value="Chromosome 5"/>
</dbReference>
<dbReference type="ExpressionAtlas" id="Q9LSS7">
    <property type="expression patterns" value="baseline and differential"/>
</dbReference>
<dbReference type="GO" id="GO:0008234">
    <property type="term" value="F:cysteine-type peptidase activity"/>
    <property type="evidence" value="ECO:0007669"/>
    <property type="project" value="UniProtKB-KW"/>
</dbReference>
<dbReference type="GO" id="GO:0019784">
    <property type="term" value="F:deNEDDylase activity"/>
    <property type="evidence" value="ECO:0000314"/>
    <property type="project" value="TAIR"/>
</dbReference>
<dbReference type="GO" id="GO:0006508">
    <property type="term" value="P:proteolysis"/>
    <property type="evidence" value="ECO:0007669"/>
    <property type="project" value="UniProtKB-KW"/>
</dbReference>
<dbReference type="FunFam" id="3.40.395.10:FF:000008">
    <property type="entry name" value="Ulp1 protease family protein"/>
    <property type="match status" value="1"/>
</dbReference>
<dbReference type="Gene3D" id="3.40.395.10">
    <property type="entry name" value="Adenoviral Proteinase, Chain A"/>
    <property type="match status" value="1"/>
</dbReference>
<dbReference type="InterPro" id="IPR044613">
    <property type="entry name" value="Nep1/2-like"/>
</dbReference>
<dbReference type="InterPro" id="IPR038765">
    <property type="entry name" value="Papain-like_cys_pep_sf"/>
</dbReference>
<dbReference type="InterPro" id="IPR003653">
    <property type="entry name" value="Peptidase_C48_C"/>
</dbReference>
<dbReference type="PANTHER" id="PTHR46468">
    <property type="entry name" value="SENTRIN-SPECIFIC PROTEASE 8"/>
    <property type="match status" value="1"/>
</dbReference>
<dbReference type="PANTHER" id="PTHR46468:SF1">
    <property type="entry name" value="SENTRIN-SPECIFIC PROTEASE 8"/>
    <property type="match status" value="1"/>
</dbReference>
<dbReference type="Pfam" id="PF02902">
    <property type="entry name" value="Peptidase_C48"/>
    <property type="match status" value="1"/>
</dbReference>
<dbReference type="SUPFAM" id="SSF54001">
    <property type="entry name" value="Cysteine proteinases"/>
    <property type="match status" value="1"/>
</dbReference>
<dbReference type="PROSITE" id="PS50600">
    <property type="entry name" value="ULP_PROTEASE"/>
    <property type="match status" value="1"/>
</dbReference>
<gene>
    <name type="primary">NEDP1</name>
    <name type="synonym">DEN1</name>
    <name type="ordered locus">At5g60190</name>
    <name type="ORF">F15L12.8</name>
</gene>
<evidence type="ECO:0000269" key="1">
    <source>
    </source>
</evidence>
<evidence type="ECO:0000305" key="2"/>
<comment type="function">
    <text evidence="1">Processes the pre-form of the ubiquitin-like protein NEDD8/RUB1. Has the capacity to discriminate between NEDD8/RUB1 and ubiquitin. Has no SUMO protease activity.</text>
</comment>
<comment type="similarity">
    <text evidence="2">Belongs to the peptidase C48 family.</text>
</comment>
<sequence>MGNTSDDDKILSYEDVVLRRSDLDILNGPIFLNDRVIEFYLSFLSTVHSSTTISLIPPSIAFWISNCPDTEYLKDFMKPLNLRDKDLLILPVNDNSNVEVAEGGLHWSLLVYYKEANTFVHHDSYMGVNRWSAKQLFKAVSPFVSNGDASYKECTDTPQQKNGYDCGVFLLATARVICEWFSSGGMKNRDELWFANVKETVPDLVNHLREEILALIKKLMSESVSK</sequence>
<proteinExistence type="evidence at transcript level"/>
<accession>Q9LSS7</accession>
<name>RUBP1_ARATH</name>
<organism>
    <name type="scientific">Arabidopsis thaliana</name>
    <name type="common">Mouse-ear cress</name>
    <dbReference type="NCBI Taxonomy" id="3702"/>
    <lineage>
        <taxon>Eukaryota</taxon>
        <taxon>Viridiplantae</taxon>
        <taxon>Streptophyta</taxon>
        <taxon>Embryophyta</taxon>
        <taxon>Tracheophyta</taxon>
        <taxon>Spermatophyta</taxon>
        <taxon>Magnoliopsida</taxon>
        <taxon>eudicotyledons</taxon>
        <taxon>Gunneridae</taxon>
        <taxon>Pentapetalae</taxon>
        <taxon>rosids</taxon>
        <taxon>malvids</taxon>
        <taxon>Brassicales</taxon>
        <taxon>Brassicaceae</taxon>
        <taxon>Camelineae</taxon>
        <taxon>Arabidopsis</taxon>
    </lineage>
</organism>
<feature type="chain" id="PRO_0000395975" description="NEDD8-specific protease 1">
    <location>
        <begin position="1"/>
        <end position="226"/>
    </location>
</feature>
<keyword id="KW-0378">Hydrolase</keyword>
<keyword id="KW-0645">Protease</keyword>
<keyword id="KW-1185">Reference proteome</keyword>
<keyword id="KW-0788">Thiol protease</keyword>
<keyword id="KW-0833">Ubl conjugation pathway</keyword>
<reference key="1">
    <citation type="submission" date="1999-04" db="EMBL/GenBank/DDBJ databases">
        <title>Structural analysis of Arabidopsis thaliana chromosome 5. XI.</title>
        <authorList>
            <person name="Kaneko T."/>
            <person name="Katoh T."/>
            <person name="Asamizu E."/>
            <person name="Sato S."/>
            <person name="Nakamura Y."/>
            <person name="Kotani H."/>
            <person name="Tabata S."/>
        </authorList>
    </citation>
    <scope>NUCLEOTIDE SEQUENCE [LARGE SCALE GENOMIC DNA]</scope>
    <source>
        <strain>cv. Columbia</strain>
    </source>
</reference>
<reference key="2">
    <citation type="journal article" date="2017" name="Plant J.">
        <title>Araport11: a complete reannotation of the Arabidopsis thaliana reference genome.</title>
        <authorList>
            <person name="Cheng C.Y."/>
            <person name="Krishnakumar V."/>
            <person name="Chan A.P."/>
            <person name="Thibaud-Nissen F."/>
            <person name="Schobel S."/>
            <person name="Town C.D."/>
        </authorList>
    </citation>
    <scope>GENOME REANNOTATION</scope>
    <source>
        <strain>cv. Columbia</strain>
    </source>
</reference>
<reference key="3">
    <citation type="submission" date="2004-03" db="EMBL/GenBank/DDBJ databases">
        <title>Arabidopsis ORF clones.</title>
        <authorList>
            <person name="Kim C.J."/>
            <person name="Chen H."/>
            <person name="Cheuk R."/>
            <person name="Shinn P."/>
            <person name="Carninci P."/>
            <person name="Hayashizaki Y."/>
            <person name="Ishida J."/>
            <person name="Kamiya A."/>
            <person name="Kawai J."/>
            <person name="Narusaka M."/>
            <person name="Sakurai T."/>
            <person name="Satou M."/>
            <person name="Seki M."/>
            <person name="Shinozaki K."/>
            <person name="Ecker J.R."/>
        </authorList>
    </citation>
    <scope>NUCLEOTIDE SEQUENCE [LARGE SCALE MRNA]</scope>
</reference>
<reference key="4">
    <citation type="submission" date="2005-03" db="EMBL/GenBank/DDBJ databases">
        <title>Large-scale analysis of RIKEN Arabidopsis full-length (RAFL) cDNAs.</title>
        <authorList>
            <person name="Totoki Y."/>
            <person name="Seki M."/>
            <person name="Ishida J."/>
            <person name="Nakajima M."/>
            <person name="Enju A."/>
            <person name="Kamiya A."/>
            <person name="Narusaka M."/>
            <person name="Shin-i T."/>
            <person name="Nakagawa M."/>
            <person name="Sakamoto N."/>
            <person name="Oishi K."/>
            <person name="Kohara Y."/>
            <person name="Kobayashi M."/>
            <person name="Toyoda A."/>
            <person name="Sakaki Y."/>
            <person name="Sakurai T."/>
            <person name="Iida K."/>
            <person name="Akiyama K."/>
            <person name="Satou M."/>
            <person name="Toyoda T."/>
            <person name="Konagaya A."/>
            <person name="Carninci P."/>
            <person name="Kawai J."/>
            <person name="Hayashizaki Y."/>
            <person name="Shinozaki K."/>
        </authorList>
    </citation>
    <scope>NUCLEOTIDE SEQUENCE [LARGE SCALE MRNA]</scope>
    <source>
        <strain>cv. Columbia</strain>
    </source>
</reference>
<reference key="5">
    <citation type="journal article" date="2006" name="Plant Physiol.">
        <title>SUMO-conjugating and SUMO-deconjugating enzymes from Arabidopsis.</title>
        <authorList>
            <person name="Colby T."/>
            <person name="Matthai A."/>
            <person name="Boeckelmann A."/>
            <person name="Stuible H.P."/>
        </authorList>
    </citation>
    <scope>FUNCTION</scope>
    <scope>GENE FAMILY</scope>
    <scope>NOMENCLATURE</scope>
</reference>
<protein>
    <recommendedName>
        <fullName>NEDD8-specific protease 1</fullName>
        <ecNumber>3.4.22.-</ecNumber>
    </recommendedName>
    <alternativeName>
        <fullName>Deneddylase-1</fullName>
    </alternativeName>
</protein>